<name>PYRH_MESFL</name>
<keyword id="KW-0067">ATP-binding</keyword>
<keyword id="KW-0963">Cytoplasm</keyword>
<keyword id="KW-0418">Kinase</keyword>
<keyword id="KW-0547">Nucleotide-binding</keyword>
<keyword id="KW-0665">Pyrimidine biosynthesis</keyword>
<keyword id="KW-1185">Reference proteome</keyword>
<keyword id="KW-0808">Transferase</keyword>
<comment type="function">
    <text evidence="1">Catalyzes the reversible phosphorylation of UMP to UDP.</text>
</comment>
<comment type="catalytic activity">
    <reaction evidence="1">
        <text>UMP + ATP = UDP + ADP</text>
        <dbReference type="Rhea" id="RHEA:24400"/>
        <dbReference type="ChEBI" id="CHEBI:30616"/>
        <dbReference type="ChEBI" id="CHEBI:57865"/>
        <dbReference type="ChEBI" id="CHEBI:58223"/>
        <dbReference type="ChEBI" id="CHEBI:456216"/>
        <dbReference type="EC" id="2.7.4.22"/>
    </reaction>
</comment>
<comment type="activity regulation">
    <text evidence="1">Inhibited by UTP.</text>
</comment>
<comment type="pathway">
    <text evidence="1">Pyrimidine metabolism; CTP biosynthesis via de novo pathway; UDP from UMP (UMPK route): step 1/1.</text>
</comment>
<comment type="subunit">
    <text evidence="1">Homohexamer.</text>
</comment>
<comment type="subcellular location">
    <subcellularLocation>
        <location evidence="1">Cytoplasm</location>
    </subcellularLocation>
</comment>
<comment type="similarity">
    <text evidence="1">Belongs to the UMP kinase family.</text>
</comment>
<sequence length="238" mass="26392">MKYKYSTVLLKLSGEALKSENEIYNKEKLEDIAKQIVELAKNGLKLGIVIGGGNIWRGKLGTDIDMPQINADYMGMLATVMNGLALESTIKRLGYDKVNVYSSLPIETVTDDYNFKRARLKMNEGYISIFVGGTGFSYFTTDTNSVIRAIEIGADAVLMAKNGVKGVYDSDPNLNPNAKFYKKLTHREIAENQLRVMDLTAATLAKDAKLPIEVFDMQGQNNIIKVMEGSLESTIIEE</sequence>
<dbReference type="EC" id="2.7.4.22" evidence="1"/>
<dbReference type="EMBL" id="AE017263">
    <property type="protein sequence ID" value="AAT75914.1"/>
    <property type="molecule type" value="Genomic_DNA"/>
</dbReference>
<dbReference type="RefSeq" id="WP_011183454.1">
    <property type="nucleotide sequence ID" value="NC_006055.1"/>
</dbReference>
<dbReference type="RefSeq" id="YP_053798.1">
    <property type="nucleotide sequence ID" value="NC_006055.1"/>
</dbReference>
<dbReference type="SMR" id="Q6F0Q9"/>
<dbReference type="STRING" id="265311.Mfl556"/>
<dbReference type="PaxDb" id="265311-Mfl556"/>
<dbReference type="EnsemblBacteria" id="AAT75914">
    <property type="protein sequence ID" value="AAT75914"/>
    <property type="gene ID" value="Mfl556"/>
</dbReference>
<dbReference type="GeneID" id="2897914"/>
<dbReference type="KEGG" id="mfl:Mfl556"/>
<dbReference type="PATRIC" id="fig|265311.5.peg.561"/>
<dbReference type="eggNOG" id="COG0528">
    <property type="taxonomic scope" value="Bacteria"/>
</dbReference>
<dbReference type="HOGENOM" id="CLU_033861_0_1_14"/>
<dbReference type="OrthoDB" id="9807458at2"/>
<dbReference type="UniPathway" id="UPA00159">
    <property type="reaction ID" value="UER00275"/>
</dbReference>
<dbReference type="Proteomes" id="UP000006647">
    <property type="component" value="Chromosome"/>
</dbReference>
<dbReference type="GO" id="GO:0005737">
    <property type="term" value="C:cytoplasm"/>
    <property type="evidence" value="ECO:0007669"/>
    <property type="project" value="UniProtKB-SubCell"/>
</dbReference>
<dbReference type="GO" id="GO:0005524">
    <property type="term" value="F:ATP binding"/>
    <property type="evidence" value="ECO:0007669"/>
    <property type="project" value="UniProtKB-KW"/>
</dbReference>
<dbReference type="GO" id="GO:0033862">
    <property type="term" value="F:UMP kinase activity"/>
    <property type="evidence" value="ECO:0007669"/>
    <property type="project" value="UniProtKB-EC"/>
</dbReference>
<dbReference type="GO" id="GO:0044210">
    <property type="term" value="P:'de novo' CTP biosynthetic process"/>
    <property type="evidence" value="ECO:0007669"/>
    <property type="project" value="UniProtKB-UniRule"/>
</dbReference>
<dbReference type="GO" id="GO:0006225">
    <property type="term" value="P:UDP biosynthetic process"/>
    <property type="evidence" value="ECO:0007669"/>
    <property type="project" value="TreeGrafter"/>
</dbReference>
<dbReference type="CDD" id="cd04254">
    <property type="entry name" value="AAK_UMPK-PyrH-Ec"/>
    <property type="match status" value="1"/>
</dbReference>
<dbReference type="FunFam" id="3.40.1160.10:FF:000001">
    <property type="entry name" value="Uridylate kinase"/>
    <property type="match status" value="1"/>
</dbReference>
<dbReference type="Gene3D" id="3.40.1160.10">
    <property type="entry name" value="Acetylglutamate kinase-like"/>
    <property type="match status" value="1"/>
</dbReference>
<dbReference type="HAMAP" id="MF_01220_B">
    <property type="entry name" value="PyrH_B"/>
    <property type="match status" value="1"/>
</dbReference>
<dbReference type="InterPro" id="IPR036393">
    <property type="entry name" value="AceGlu_kinase-like_sf"/>
</dbReference>
<dbReference type="InterPro" id="IPR001048">
    <property type="entry name" value="Asp/Glu/Uridylate_kinase"/>
</dbReference>
<dbReference type="InterPro" id="IPR011817">
    <property type="entry name" value="Uridylate_kinase"/>
</dbReference>
<dbReference type="InterPro" id="IPR015963">
    <property type="entry name" value="Uridylate_kinase_bac"/>
</dbReference>
<dbReference type="NCBIfam" id="TIGR02075">
    <property type="entry name" value="pyrH_bact"/>
    <property type="match status" value="1"/>
</dbReference>
<dbReference type="PANTHER" id="PTHR42833">
    <property type="entry name" value="URIDYLATE KINASE"/>
    <property type="match status" value="1"/>
</dbReference>
<dbReference type="PANTHER" id="PTHR42833:SF4">
    <property type="entry name" value="URIDYLATE KINASE PUMPKIN, CHLOROPLASTIC"/>
    <property type="match status" value="1"/>
</dbReference>
<dbReference type="Pfam" id="PF00696">
    <property type="entry name" value="AA_kinase"/>
    <property type="match status" value="1"/>
</dbReference>
<dbReference type="PIRSF" id="PIRSF005650">
    <property type="entry name" value="Uridylate_kin"/>
    <property type="match status" value="1"/>
</dbReference>
<dbReference type="SUPFAM" id="SSF53633">
    <property type="entry name" value="Carbamate kinase-like"/>
    <property type="match status" value="1"/>
</dbReference>
<gene>
    <name evidence="1" type="primary">pyrH</name>
    <name type="ordered locus">Mfl556</name>
</gene>
<protein>
    <recommendedName>
        <fullName evidence="1">Uridylate kinase</fullName>
        <shortName evidence="1">UK</shortName>
        <ecNumber evidence="1">2.7.4.22</ecNumber>
    </recommendedName>
    <alternativeName>
        <fullName evidence="1">Uridine monophosphate kinase</fullName>
        <shortName evidence="1">UMP kinase</shortName>
        <shortName evidence="1">UMPK</shortName>
    </alternativeName>
</protein>
<evidence type="ECO:0000255" key="1">
    <source>
        <dbReference type="HAMAP-Rule" id="MF_01220"/>
    </source>
</evidence>
<accession>Q6F0Q9</accession>
<feature type="chain" id="PRO_0000323882" description="Uridylate kinase">
    <location>
        <begin position="1"/>
        <end position="238"/>
    </location>
</feature>
<feature type="binding site" evidence="1">
    <location>
        <begin position="11"/>
        <end position="14"/>
    </location>
    <ligand>
        <name>ATP</name>
        <dbReference type="ChEBI" id="CHEBI:30616"/>
    </ligand>
</feature>
<feature type="binding site" evidence="1">
    <location>
        <position position="52"/>
    </location>
    <ligand>
        <name>UMP</name>
        <dbReference type="ChEBI" id="CHEBI:57865"/>
    </ligand>
</feature>
<feature type="binding site" evidence="1">
    <location>
        <position position="53"/>
    </location>
    <ligand>
        <name>ATP</name>
        <dbReference type="ChEBI" id="CHEBI:30616"/>
    </ligand>
</feature>
<feature type="binding site" evidence="1">
    <location>
        <position position="57"/>
    </location>
    <ligand>
        <name>ATP</name>
        <dbReference type="ChEBI" id="CHEBI:30616"/>
    </ligand>
</feature>
<feature type="binding site" evidence="1">
    <location>
        <position position="72"/>
    </location>
    <ligand>
        <name>UMP</name>
        <dbReference type="ChEBI" id="CHEBI:57865"/>
    </ligand>
</feature>
<feature type="binding site" evidence="1">
    <location>
        <begin position="134"/>
        <end position="141"/>
    </location>
    <ligand>
        <name>UMP</name>
        <dbReference type="ChEBI" id="CHEBI:57865"/>
    </ligand>
</feature>
<feature type="binding site" evidence="1">
    <location>
        <position position="162"/>
    </location>
    <ligand>
        <name>ATP</name>
        <dbReference type="ChEBI" id="CHEBI:30616"/>
    </ligand>
</feature>
<feature type="binding site" evidence="1">
    <location>
        <position position="168"/>
    </location>
    <ligand>
        <name>ATP</name>
        <dbReference type="ChEBI" id="CHEBI:30616"/>
    </ligand>
</feature>
<feature type="binding site" evidence="1">
    <location>
        <position position="171"/>
    </location>
    <ligand>
        <name>ATP</name>
        <dbReference type="ChEBI" id="CHEBI:30616"/>
    </ligand>
</feature>
<reference key="1">
    <citation type="submission" date="2004-06" db="EMBL/GenBank/DDBJ databases">
        <authorList>
            <person name="Birren B.W."/>
            <person name="Stange-Thomann N."/>
            <person name="Hafez N."/>
            <person name="DeCaprio D."/>
            <person name="Fisher S."/>
            <person name="Butler J."/>
            <person name="Elkins T."/>
            <person name="Kodira C.D."/>
            <person name="Major J."/>
            <person name="Wang S."/>
            <person name="Nicol R."/>
            <person name="Nusbaum C."/>
        </authorList>
    </citation>
    <scope>NUCLEOTIDE SEQUENCE [LARGE SCALE GENOMIC DNA]</scope>
    <source>
        <strain>ATCC 33453 / NBRC 100688 / NCTC 11704 / L1</strain>
    </source>
</reference>
<organism>
    <name type="scientific">Mesoplasma florum (strain ATCC 33453 / NBRC 100688 / NCTC 11704 / L1)</name>
    <name type="common">Acholeplasma florum</name>
    <dbReference type="NCBI Taxonomy" id="265311"/>
    <lineage>
        <taxon>Bacteria</taxon>
        <taxon>Bacillati</taxon>
        <taxon>Mycoplasmatota</taxon>
        <taxon>Mollicutes</taxon>
        <taxon>Entomoplasmatales</taxon>
        <taxon>Entomoplasmataceae</taxon>
        <taxon>Mesoplasma</taxon>
    </lineage>
</organism>
<proteinExistence type="inferred from homology"/>